<evidence type="ECO:0000255" key="1"/>
<evidence type="ECO:0000255" key="2">
    <source>
        <dbReference type="PROSITE-ProRule" id="PRU01311"/>
    </source>
</evidence>
<evidence type="ECO:0000255" key="3">
    <source>
        <dbReference type="PROSITE-ProRule" id="PRU01312"/>
    </source>
</evidence>
<evidence type="ECO:0000305" key="4"/>
<feature type="chain" id="PRO_0000284090" description="Non-structural protein 3">
    <location>
        <begin position="1"/>
        <end position="225"/>
    </location>
</feature>
<feature type="transmembrane region" description="Helical" evidence="1">
    <location>
        <begin position="41"/>
        <end position="61"/>
    </location>
</feature>
<feature type="transmembrane region" description="Helical" evidence="1">
    <location>
        <begin position="70"/>
        <end position="92"/>
    </location>
</feature>
<feature type="transmembrane region" description="Helical" evidence="1">
    <location>
        <begin position="97"/>
        <end position="116"/>
    </location>
</feature>
<feature type="domain" description="CoV 3a-like viroporin TM" evidence="2">
    <location>
        <begin position="35"/>
        <end position="125"/>
    </location>
</feature>
<feature type="domain" description="CoV 3a-like viroporin CD" evidence="3">
    <location>
        <begin position="129"/>
        <end position="208"/>
    </location>
</feature>
<organismHost>
    <name type="scientific">Homo sapiens</name>
    <name type="common">Human</name>
    <dbReference type="NCBI Taxonomy" id="9606"/>
</organismHost>
<keyword id="KW-1043">Host membrane</keyword>
<keyword id="KW-0472">Membrane</keyword>
<keyword id="KW-1185">Reference proteome</keyword>
<keyword id="KW-0812">Transmembrane</keyword>
<keyword id="KW-1133">Transmembrane helix</keyword>
<name>NS3_CVHNL</name>
<proteinExistence type="predicted"/>
<gene>
    <name type="ORF">3</name>
</gene>
<protein>
    <recommendedName>
        <fullName>Non-structural protein 3</fullName>
        <shortName>Protein 3</shortName>
        <shortName>ns3</shortName>
    </recommendedName>
    <alternativeName>
        <fullName>Accessory protein 3a</fullName>
    </alternativeName>
</protein>
<dbReference type="EMBL" id="AY567487">
    <property type="protein sequence ID" value="AAS58178.1"/>
    <property type="molecule type" value="Genomic_RNA"/>
</dbReference>
<dbReference type="EMBL" id="DQ445911">
    <property type="protein sequence ID" value="ABE97138.1"/>
    <property type="molecule type" value="Genomic_RNA"/>
</dbReference>
<dbReference type="EMBL" id="DQ445912">
    <property type="protein sequence ID" value="ABE97131.1"/>
    <property type="molecule type" value="Genomic_RNA"/>
</dbReference>
<dbReference type="RefSeq" id="YP_003768.1">
    <property type="nucleotide sequence ID" value="NC_005831.2"/>
</dbReference>
<dbReference type="KEGG" id="vg:2943500"/>
<dbReference type="OrthoDB" id="19204at10239"/>
<dbReference type="Proteomes" id="UP000008573">
    <property type="component" value="Genome"/>
</dbReference>
<dbReference type="Proteomes" id="UP000115484">
    <property type="component" value="Genome"/>
</dbReference>
<dbReference type="Proteomes" id="UP000138462">
    <property type="component" value="Genome"/>
</dbReference>
<dbReference type="GO" id="GO:0033644">
    <property type="term" value="C:host cell membrane"/>
    <property type="evidence" value="ECO:0007669"/>
    <property type="project" value="UniProtKB-SubCell"/>
</dbReference>
<dbReference type="GO" id="GO:0016020">
    <property type="term" value="C:membrane"/>
    <property type="evidence" value="ECO:0007669"/>
    <property type="project" value="UniProtKB-KW"/>
</dbReference>
<dbReference type="InterPro" id="IPR046446">
    <property type="entry name" value="a/bCoV_VIROPORIN_3A-like_CD"/>
</dbReference>
<dbReference type="InterPro" id="IPR046445">
    <property type="entry name" value="a/bCoV_VIROPORIN_3A-like_TM"/>
</dbReference>
<dbReference type="InterPro" id="IPR004293">
    <property type="entry name" value="Coronavirus_Orf3a/b"/>
</dbReference>
<dbReference type="Pfam" id="PF03053">
    <property type="entry name" value="Corona_NS3b"/>
    <property type="match status" value="1"/>
</dbReference>
<dbReference type="PROSITE" id="PS51967">
    <property type="entry name" value="COV_VIROPORIN_3A_CD"/>
    <property type="match status" value="1"/>
</dbReference>
<dbReference type="PROSITE" id="PS51966">
    <property type="entry name" value="COV_VIROPORIN_3A_TM"/>
    <property type="match status" value="1"/>
</dbReference>
<accession>Q6Q1S1</accession>
<reference key="1">
    <citation type="journal article" date="2004" name="Nat. Med.">
        <title>Identification of a new human coronavirus.</title>
        <authorList>
            <person name="Van Der Hoek L."/>
            <person name="Pyrc K."/>
            <person name="Jebbink M.F."/>
            <person name="Vermeulen-Oost W."/>
            <person name="Berkhout R.J."/>
            <person name="Wolthers K.C."/>
            <person name="Wertheim-Van Dillen P.M."/>
            <person name="Kaandorp J."/>
            <person name="Spaargaren J."/>
            <person name="Berkhout B."/>
        </authorList>
    </citation>
    <scope>NUCLEOTIDE SEQUENCE [GENOMIC RNA]</scope>
    <source>
        <strain>Isolate Amsterdam I</strain>
    </source>
</reference>
<reference key="2">
    <citation type="journal article" date="2006" name="J. Mol. Biol.">
        <title>Mosaic structure of human coronavirus NL63, one thousand years of evolution.</title>
        <authorList>
            <person name="Pyrc K."/>
            <person name="Dijkman R."/>
            <person name="Deng L."/>
            <person name="Jebbink M.F."/>
            <person name="Ross H.A."/>
            <person name="Berkhout B."/>
            <person name="van der Hoek L."/>
        </authorList>
    </citation>
    <scope>NUCLEOTIDE SEQUENCE [GENOMIC RNA]</scope>
    <source>
        <strain>Isolate Amsterdam 057</strain>
        <strain>Isolate Amsterdam 496</strain>
    </source>
</reference>
<organism>
    <name type="scientific">Human coronavirus NL63</name>
    <name type="common">HCoV-NL63</name>
    <dbReference type="NCBI Taxonomy" id="277944"/>
    <lineage>
        <taxon>Viruses</taxon>
        <taxon>Riboviria</taxon>
        <taxon>Orthornavirae</taxon>
        <taxon>Pisuviricota</taxon>
        <taxon>Pisoniviricetes</taxon>
        <taxon>Nidovirales</taxon>
        <taxon>Cornidovirineae</taxon>
        <taxon>Coronaviridae</taxon>
        <taxon>Orthocoronavirinae</taxon>
        <taxon>Alphacoronavirus</taxon>
        <taxon>Setracovirus</taxon>
    </lineage>
</organism>
<comment type="subcellular location">
    <subcellularLocation>
        <location evidence="4">Host membrane</location>
        <topology evidence="4">Multi-pass membrane protein</topology>
    </subcellularLocation>
</comment>
<sequence>MPFGGLFQLTLESTINKSVANLKLPPHDVTVLRDNLKPVTTLSTITAYLLVSLFVTYFALFKPLTARGRVACFVLKLLTLFVYVPLLVLFGMYLDSFIIFSTLLFRFIHVGYYAYLYKNFSFVLFNVTKLCFVSGKCWYLEQSFYENRFAAIYGGDHYVVLGGETITFVSFDDLYVAIRGSCEKNLQLMRKVDLYNGAVIYIFAEEPVVGIVYSSQLYEDVPSIN</sequence>